<dbReference type="EMBL" id="CP000026">
    <property type="protein sequence ID" value="AAV79096.1"/>
    <property type="molecule type" value="Genomic_DNA"/>
</dbReference>
<dbReference type="RefSeq" id="WP_001216370.1">
    <property type="nucleotide sequence ID" value="NC_006511.1"/>
</dbReference>
<dbReference type="SMR" id="Q5PK06"/>
<dbReference type="GeneID" id="89546962"/>
<dbReference type="KEGG" id="spt:SPA3280"/>
<dbReference type="HOGENOM" id="CLU_074407_2_0_6"/>
<dbReference type="Proteomes" id="UP000008185">
    <property type="component" value="Chromosome"/>
</dbReference>
<dbReference type="GO" id="GO:0022625">
    <property type="term" value="C:cytosolic large ribosomal subunit"/>
    <property type="evidence" value="ECO:0007669"/>
    <property type="project" value="TreeGrafter"/>
</dbReference>
<dbReference type="GO" id="GO:0003735">
    <property type="term" value="F:structural constituent of ribosome"/>
    <property type="evidence" value="ECO:0007669"/>
    <property type="project" value="InterPro"/>
</dbReference>
<dbReference type="GO" id="GO:0006412">
    <property type="term" value="P:translation"/>
    <property type="evidence" value="ECO:0007669"/>
    <property type="project" value="UniProtKB-UniRule"/>
</dbReference>
<dbReference type="FunFam" id="3.90.1030.10:FF:000001">
    <property type="entry name" value="50S ribosomal protein L17"/>
    <property type="match status" value="1"/>
</dbReference>
<dbReference type="Gene3D" id="3.90.1030.10">
    <property type="entry name" value="Ribosomal protein L17"/>
    <property type="match status" value="1"/>
</dbReference>
<dbReference type="HAMAP" id="MF_01368">
    <property type="entry name" value="Ribosomal_bL17"/>
    <property type="match status" value="1"/>
</dbReference>
<dbReference type="InterPro" id="IPR000456">
    <property type="entry name" value="Ribosomal_bL17"/>
</dbReference>
<dbReference type="InterPro" id="IPR047859">
    <property type="entry name" value="Ribosomal_bL17_CS"/>
</dbReference>
<dbReference type="InterPro" id="IPR036373">
    <property type="entry name" value="Ribosomal_bL17_sf"/>
</dbReference>
<dbReference type="NCBIfam" id="TIGR00059">
    <property type="entry name" value="L17"/>
    <property type="match status" value="1"/>
</dbReference>
<dbReference type="PANTHER" id="PTHR14413:SF16">
    <property type="entry name" value="LARGE RIBOSOMAL SUBUNIT PROTEIN BL17M"/>
    <property type="match status" value="1"/>
</dbReference>
<dbReference type="PANTHER" id="PTHR14413">
    <property type="entry name" value="RIBOSOMAL PROTEIN L17"/>
    <property type="match status" value="1"/>
</dbReference>
<dbReference type="Pfam" id="PF01196">
    <property type="entry name" value="Ribosomal_L17"/>
    <property type="match status" value="1"/>
</dbReference>
<dbReference type="SUPFAM" id="SSF64263">
    <property type="entry name" value="Prokaryotic ribosomal protein L17"/>
    <property type="match status" value="1"/>
</dbReference>
<dbReference type="PROSITE" id="PS01167">
    <property type="entry name" value="RIBOSOMAL_L17"/>
    <property type="match status" value="1"/>
</dbReference>
<accession>Q5PK06</accession>
<organism>
    <name type="scientific">Salmonella paratyphi A (strain ATCC 9150 / SARB42)</name>
    <dbReference type="NCBI Taxonomy" id="295319"/>
    <lineage>
        <taxon>Bacteria</taxon>
        <taxon>Pseudomonadati</taxon>
        <taxon>Pseudomonadota</taxon>
        <taxon>Gammaproteobacteria</taxon>
        <taxon>Enterobacterales</taxon>
        <taxon>Enterobacteriaceae</taxon>
        <taxon>Salmonella</taxon>
    </lineage>
</organism>
<evidence type="ECO:0000255" key="1">
    <source>
        <dbReference type="HAMAP-Rule" id="MF_01368"/>
    </source>
</evidence>
<evidence type="ECO:0000305" key="2"/>
<gene>
    <name evidence="1" type="primary">rplQ</name>
    <name type="ordered locus">SPA3280</name>
</gene>
<sequence>MRHRKSGRQLNRNSSHRQAMFRNMAGSLVRHEIIKTTLPKAKELRRVVEPLITLAKTDSVANRRLAFARTRDNEIVAKLFNELGPRFASRAGGYTRILKCGFRAGDNAPMAYIELVDRSEKTEAAAE</sequence>
<feature type="chain" id="PRO_0000267938" description="Large ribosomal subunit protein bL17">
    <location>
        <begin position="1"/>
        <end position="127"/>
    </location>
</feature>
<reference key="1">
    <citation type="journal article" date="2004" name="Nat. Genet.">
        <title>Comparison of genome degradation in Paratyphi A and Typhi, human-restricted serovars of Salmonella enterica that cause typhoid.</title>
        <authorList>
            <person name="McClelland M."/>
            <person name="Sanderson K.E."/>
            <person name="Clifton S.W."/>
            <person name="Latreille P."/>
            <person name="Porwollik S."/>
            <person name="Sabo A."/>
            <person name="Meyer R."/>
            <person name="Bieri T."/>
            <person name="Ozersky P."/>
            <person name="McLellan M."/>
            <person name="Harkins C.R."/>
            <person name="Wang C."/>
            <person name="Nguyen C."/>
            <person name="Berghoff A."/>
            <person name="Elliott G."/>
            <person name="Kohlberg S."/>
            <person name="Strong C."/>
            <person name="Du F."/>
            <person name="Carter J."/>
            <person name="Kremizki C."/>
            <person name="Layman D."/>
            <person name="Leonard S."/>
            <person name="Sun H."/>
            <person name="Fulton L."/>
            <person name="Nash W."/>
            <person name="Miner T."/>
            <person name="Minx P."/>
            <person name="Delehaunty K."/>
            <person name="Fronick C."/>
            <person name="Magrini V."/>
            <person name="Nhan M."/>
            <person name="Warren W."/>
            <person name="Florea L."/>
            <person name="Spieth J."/>
            <person name="Wilson R.K."/>
        </authorList>
    </citation>
    <scope>NUCLEOTIDE SEQUENCE [LARGE SCALE GENOMIC DNA]</scope>
    <source>
        <strain>ATCC 9150 / SARB42</strain>
    </source>
</reference>
<keyword id="KW-0687">Ribonucleoprotein</keyword>
<keyword id="KW-0689">Ribosomal protein</keyword>
<comment type="subunit">
    <text evidence="1">Part of the 50S ribosomal subunit. Contacts protein L32.</text>
</comment>
<comment type="similarity">
    <text evidence="1">Belongs to the bacterial ribosomal protein bL17 family.</text>
</comment>
<proteinExistence type="inferred from homology"/>
<name>RL17_SALPA</name>
<protein>
    <recommendedName>
        <fullName evidence="1">Large ribosomal subunit protein bL17</fullName>
    </recommendedName>
    <alternativeName>
        <fullName evidence="2">50S ribosomal protein L17</fullName>
    </alternativeName>
</protein>